<organism>
    <name type="scientific">Escherichia coli O9:H4 (strain HS)</name>
    <dbReference type="NCBI Taxonomy" id="331112"/>
    <lineage>
        <taxon>Bacteria</taxon>
        <taxon>Pseudomonadati</taxon>
        <taxon>Pseudomonadota</taxon>
        <taxon>Gammaproteobacteria</taxon>
        <taxon>Enterobacterales</taxon>
        <taxon>Enterobacteriaceae</taxon>
        <taxon>Escherichia</taxon>
    </lineage>
</organism>
<protein>
    <recommendedName>
        <fullName evidence="1">Ribosomal RNA small subunit methyltransferase G</fullName>
        <ecNumber evidence="1">2.1.1.170</ecNumber>
    </recommendedName>
    <alternativeName>
        <fullName evidence="1">16S rRNA 7-methylguanosine methyltransferase</fullName>
        <shortName evidence="1">16S rRNA m7G methyltransferase</shortName>
    </alternativeName>
</protein>
<accession>A8A6K3</accession>
<name>RSMG_ECOHS</name>
<feature type="chain" id="PRO_1000057506" description="Ribosomal RNA small subunit methyltransferase G">
    <location>
        <begin position="1"/>
        <end position="207"/>
    </location>
</feature>
<feature type="binding site" evidence="1">
    <location>
        <position position="73"/>
    </location>
    <ligand>
        <name>S-adenosyl-L-methionine</name>
        <dbReference type="ChEBI" id="CHEBI:59789"/>
    </ligand>
</feature>
<feature type="binding site" evidence="1">
    <location>
        <position position="78"/>
    </location>
    <ligand>
        <name>S-adenosyl-L-methionine</name>
        <dbReference type="ChEBI" id="CHEBI:59789"/>
    </ligand>
</feature>
<feature type="binding site" evidence="1">
    <location>
        <begin position="124"/>
        <end position="125"/>
    </location>
    <ligand>
        <name>S-adenosyl-L-methionine</name>
        <dbReference type="ChEBI" id="CHEBI:59789"/>
    </ligand>
</feature>
<feature type="binding site" evidence="1">
    <location>
        <position position="139"/>
    </location>
    <ligand>
        <name>S-adenosyl-L-methionine</name>
        <dbReference type="ChEBI" id="CHEBI:59789"/>
    </ligand>
</feature>
<dbReference type="EC" id="2.1.1.170" evidence="1"/>
<dbReference type="EMBL" id="CP000802">
    <property type="protein sequence ID" value="ABV08157.1"/>
    <property type="molecule type" value="Genomic_DNA"/>
</dbReference>
<dbReference type="RefSeq" id="WP_000932839.1">
    <property type="nucleotide sequence ID" value="NC_009800.1"/>
</dbReference>
<dbReference type="SMR" id="A8A6K3"/>
<dbReference type="GeneID" id="93778227"/>
<dbReference type="KEGG" id="ecx:EcHS_A3956"/>
<dbReference type="HOGENOM" id="CLU_065341_2_2_6"/>
<dbReference type="GO" id="GO:0005829">
    <property type="term" value="C:cytosol"/>
    <property type="evidence" value="ECO:0007669"/>
    <property type="project" value="TreeGrafter"/>
</dbReference>
<dbReference type="GO" id="GO:0070043">
    <property type="term" value="F:rRNA (guanine-N7-)-methyltransferase activity"/>
    <property type="evidence" value="ECO:0007669"/>
    <property type="project" value="UniProtKB-UniRule"/>
</dbReference>
<dbReference type="CDD" id="cd02440">
    <property type="entry name" value="AdoMet_MTases"/>
    <property type="match status" value="1"/>
</dbReference>
<dbReference type="FunFam" id="3.40.50.150:FF:000032">
    <property type="entry name" value="Ribosomal RNA small subunit methyltransferase G"/>
    <property type="match status" value="1"/>
</dbReference>
<dbReference type="Gene3D" id="3.40.50.150">
    <property type="entry name" value="Vaccinia Virus protein VP39"/>
    <property type="match status" value="1"/>
</dbReference>
<dbReference type="HAMAP" id="MF_00074">
    <property type="entry name" value="16SrRNA_methyltr_G"/>
    <property type="match status" value="1"/>
</dbReference>
<dbReference type="InterPro" id="IPR003682">
    <property type="entry name" value="rRNA_ssu_MeTfrase_G"/>
</dbReference>
<dbReference type="InterPro" id="IPR029063">
    <property type="entry name" value="SAM-dependent_MTases_sf"/>
</dbReference>
<dbReference type="NCBIfam" id="TIGR00138">
    <property type="entry name" value="rsmG_gidB"/>
    <property type="match status" value="1"/>
</dbReference>
<dbReference type="PANTHER" id="PTHR31760">
    <property type="entry name" value="S-ADENOSYL-L-METHIONINE-DEPENDENT METHYLTRANSFERASES SUPERFAMILY PROTEIN"/>
    <property type="match status" value="1"/>
</dbReference>
<dbReference type="PANTHER" id="PTHR31760:SF0">
    <property type="entry name" value="S-ADENOSYL-L-METHIONINE-DEPENDENT METHYLTRANSFERASES SUPERFAMILY PROTEIN"/>
    <property type="match status" value="1"/>
</dbReference>
<dbReference type="Pfam" id="PF02527">
    <property type="entry name" value="GidB"/>
    <property type="match status" value="1"/>
</dbReference>
<dbReference type="PIRSF" id="PIRSF003078">
    <property type="entry name" value="GidB"/>
    <property type="match status" value="1"/>
</dbReference>
<dbReference type="SUPFAM" id="SSF53335">
    <property type="entry name" value="S-adenosyl-L-methionine-dependent methyltransferases"/>
    <property type="match status" value="1"/>
</dbReference>
<sequence>MLNKLSLLLKDAGISLTDHQKNQLIAYVNMLHKWNKAYNLTSVRDPNEMLVRHILDSIVVAPYLQGERFIDVGTGPGLPGIPLSIVRPEAHFTLLDSLGKRVRFLRQVQHELKLENIEPVQSRVEEFPSEPPFDGVISRAFASLNDMVSWCHHLPGEQGRFYALKGQMPEDEIALLPEEYQVESVVKLQVPALDGERHLVVIKANKI</sequence>
<gene>
    <name evidence="1" type="primary">rsmG</name>
    <name type="ordered locus">EcHS_A3956</name>
</gene>
<proteinExistence type="inferred from homology"/>
<comment type="function">
    <text evidence="1">Specifically methylates the N7 position of guanine in position 527 of 16S rRNA.</text>
</comment>
<comment type="catalytic activity">
    <reaction evidence="1">
        <text>guanosine(527) in 16S rRNA + S-adenosyl-L-methionine = N(7)-methylguanosine(527) in 16S rRNA + S-adenosyl-L-homocysteine</text>
        <dbReference type="Rhea" id="RHEA:42732"/>
        <dbReference type="Rhea" id="RHEA-COMP:10209"/>
        <dbReference type="Rhea" id="RHEA-COMP:10210"/>
        <dbReference type="ChEBI" id="CHEBI:57856"/>
        <dbReference type="ChEBI" id="CHEBI:59789"/>
        <dbReference type="ChEBI" id="CHEBI:74269"/>
        <dbReference type="ChEBI" id="CHEBI:74480"/>
        <dbReference type="EC" id="2.1.1.170"/>
    </reaction>
</comment>
<comment type="subcellular location">
    <subcellularLocation>
        <location evidence="1">Cytoplasm</location>
    </subcellularLocation>
</comment>
<comment type="similarity">
    <text evidence="1">Belongs to the methyltransferase superfamily. RNA methyltransferase RsmG family.</text>
</comment>
<reference key="1">
    <citation type="journal article" date="2008" name="J. Bacteriol.">
        <title>The pangenome structure of Escherichia coli: comparative genomic analysis of E. coli commensal and pathogenic isolates.</title>
        <authorList>
            <person name="Rasko D.A."/>
            <person name="Rosovitz M.J."/>
            <person name="Myers G.S.A."/>
            <person name="Mongodin E.F."/>
            <person name="Fricke W.F."/>
            <person name="Gajer P."/>
            <person name="Crabtree J."/>
            <person name="Sebaihia M."/>
            <person name="Thomson N.R."/>
            <person name="Chaudhuri R."/>
            <person name="Henderson I.R."/>
            <person name="Sperandio V."/>
            <person name="Ravel J."/>
        </authorList>
    </citation>
    <scope>NUCLEOTIDE SEQUENCE [LARGE SCALE GENOMIC DNA]</scope>
    <source>
        <strain>HS</strain>
    </source>
</reference>
<keyword id="KW-0963">Cytoplasm</keyword>
<keyword id="KW-0489">Methyltransferase</keyword>
<keyword id="KW-0698">rRNA processing</keyword>
<keyword id="KW-0949">S-adenosyl-L-methionine</keyword>
<keyword id="KW-0808">Transferase</keyword>
<evidence type="ECO:0000255" key="1">
    <source>
        <dbReference type="HAMAP-Rule" id="MF_00074"/>
    </source>
</evidence>